<gene>
    <name evidence="1" type="primary">argS</name>
    <name type="ordered locus">SPJ_2100</name>
</gene>
<keyword id="KW-0030">Aminoacyl-tRNA synthetase</keyword>
<keyword id="KW-0067">ATP-binding</keyword>
<keyword id="KW-0963">Cytoplasm</keyword>
<keyword id="KW-0436">Ligase</keyword>
<keyword id="KW-0547">Nucleotide-binding</keyword>
<keyword id="KW-0648">Protein biosynthesis</keyword>
<proteinExistence type="inferred from homology"/>
<comment type="catalytic activity">
    <reaction evidence="1">
        <text>tRNA(Arg) + L-arginine + ATP = L-arginyl-tRNA(Arg) + AMP + diphosphate</text>
        <dbReference type="Rhea" id="RHEA:20301"/>
        <dbReference type="Rhea" id="RHEA-COMP:9658"/>
        <dbReference type="Rhea" id="RHEA-COMP:9673"/>
        <dbReference type="ChEBI" id="CHEBI:30616"/>
        <dbReference type="ChEBI" id="CHEBI:32682"/>
        <dbReference type="ChEBI" id="CHEBI:33019"/>
        <dbReference type="ChEBI" id="CHEBI:78442"/>
        <dbReference type="ChEBI" id="CHEBI:78513"/>
        <dbReference type="ChEBI" id="CHEBI:456215"/>
        <dbReference type="EC" id="6.1.1.19"/>
    </reaction>
</comment>
<comment type="subunit">
    <text evidence="1">Monomer.</text>
</comment>
<comment type="subcellular location">
    <subcellularLocation>
        <location evidence="1">Cytoplasm</location>
    </subcellularLocation>
</comment>
<comment type="similarity">
    <text evidence="1">Belongs to the class-I aminoacyl-tRNA synthetase family.</text>
</comment>
<evidence type="ECO:0000255" key="1">
    <source>
        <dbReference type="HAMAP-Rule" id="MF_00123"/>
    </source>
</evidence>
<name>SYR_STRZJ</name>
<reference key="1">
    <citation type="journal article" date="2010" name="Genome Biol.">
        <title>Structure and dynamics of the pan-genome of Streptococcus pneumoniae and closely related species.</title>
        <authorList>
            <person name="Donati C."/>
            <person name="Hiller N.L."/>
            <person name="Tettelin H."/>
            <person name="Muzzi A."/>
            <person name="Croucher N.J."/>
            <person name="Angiuoli S.V."/>
            <person name="Oggioni M."/>
            <person name="Dunning Hotopp J.C."/>
            <person name="Hu F.Z."/>
            <person name="Riley D.R."/>
            <person name="Covacci A."/>
            <person name="Mitchell T.J."/>
            <person name="Bentley S.D."/>
            <person name="Kilian M."/>
            <person name="Ehrlich G.D."/>
            <person name="Rappuoli R."/>
            <person name="Moxon E.R."/>
            <person name="Masignani V."/>
        </authorList>
    </citation>
    <scope>NUCLEOTIDE SEQUENCE [LARGE SCALE GENOMIC DNA]</scope>
    <source>
        <strain>JJA</strain>
    </source>
</reference>
<protein>
    <recommendedName>
        <fullName evidence="1">Arginine--tRNA ligase</fullName>
        <ecNumber evidence="1">6.1.1.19</ecNumber>
    </recommendedName>
    <alternativeName>
        <fullName evidence="1">Arginyl-tRNA synthetase</fullName>
        <shortName evidence="1">ArgRS</shortName>
    </alternativeName>
</protein>
<organism>
    <name type="scientific">Streptococcus pneumoniae (strain JJA)</name>
    <dbReference type="NCBI Taxonomy" id="488222"/>
    <lineage>
        <taxon>Bacteria</taxon>
        <taxon>Bacillati</taxon>
        <taxon>Bacillota</taxon>
        <taxon>Bacilli</taxon>
        <taxon>Lactobacillales</taxon>
        <taxon>Streptococcaceae</taxon>
        <taxon>Streptococcus</taxon>
    </lineage>
</organism>
<dbReference type="EC" id="6.1.1.19" evidence="1"/>
<dbReference type="EMBL" id="CP000919">
    <property type="protein sequence ID" value="ACO19701.1"/>
    <property type="molecule type" value="Genomic_DNA"/>
</dbReference>
<dbReference type="RefSeq" id="WP_001092739.1">
    <property type="nucleotide sequence ID" value="NC_012466.1"/>
</dbReference>
<dbReference type="SMR" id="C1CH08"/>
<dbReference type="KEGG" id="sjj:SPJ_2100"/>
<dbReference type="HOGENOM" id="CLU_006406_6_1_9"/>
<dbReference type="Proteomes" id="UP000002206">
    <property type="component" value="Chromosome"/>
</dbReference>
<dbReference type="GO" id="GO:0005737">
    <property type="term" value="C:cytoplasm"/>
    <property type="evidence" value="ECO:0007669"/>
    <property type="project" value="UniProtKB-SubCell"/>
</dbReference>
<dbReference type="GO" id="GO:0004814">
    <property type="term" value="F:arginine-tRNA ligase activity"/>
    <property type="evidence" value="ECO:0007669"/>
    <property type="project" value="UniProtKB-UniRule"/>
</dbReference>
<dbReference type="GO" id="GO:0005524">
    <property type="term" value="F:ATP binding"/>
    <property type="evidence" value="ECO:0007669"/>
    <property type="project" value="UniProtKB-UniRule"/>
</dbReference>
<dbReference type="GO" id="GO:0006420">
    <property type="term" value="P:arginyl-tRNA aminoacylation"/>
    <property type="evidence" value="ECO:0007669"/>
    <property type="project" value="UniProtKB-UniRule"/>
</dbReference>
<dbReference type="CDD" id="cd07956">
    <property type="entry name" value="Anticodon_Ia_Arg"/>
    <property type="match status" value="1"/>
</dbReference>
<dbReference type="CDD" id="cd00671">
    <property type="entry name" value="ArgRS_core"/>
    <property type="match status" value="1"/>
</dbReference>
<dbReference type="FunFam" id="1.10.730.10:FF:000034">
    <property type="entry name" value="Arginine--tRNA ligase"/>
    <property type="match status" value="1"/>
</dbReference>
<dbReference type="FunFam" id="3.30.1360.70:FF:000005">
    <property type="entry name" value="Arginine--tRNA ligase"/>
    <property type="match status" value="1"/>
</dbReference>
<dbReference type="FunFam" id="3.40.50.620:FF:000116">
    <property type="entry name" value="Arginine--tRNA ligase"/>
    <property type="match status" value="1"/>
</dbReference>
<dbReference type="Gene3D" id="3.30.1360.70">
    <property type="entry name" value="Arginyl tRNA synthetase N-terminal domain"/>
    <property type="match status" value="1"/>
</dbReference>
<dbReference type="Gene3D" id="3.40.50.620">
    <property type="entry name" value="HUPs"/>
    <property type="match status" value="1"/>
</dbReference>
<dbReference type="Gene3D" id="1.10.730.10">
    <property type="entry name" value="Isoleucyl-tRNA Synthetase, Domain 1"/>
    <property type="match status" value="1"/>
</dbReference>
<dbReference type="HAMAP" id="MF_00123">
    <property type="entry name" value="Arg_tRNA_synth"/>
    <property type="match status" value="1"/>
</dbReference>
<dbReference type="InterPro" id="IPR001278">
    <property type="entry name" value="Arg-tRNA-ligase"/>
</dbReference>
<dbReference type="InterPro" id="IPR005148">
    <property type="entry name" value="Arg-tRNA-synth_N"/>
</dbReference>
<dbReference type="InterPro" id="IPR036695">
    <property type="entry name" value="Arg-tRNA-synth_N_sf"/>
</dbReference>
<dbReference type="InterPro" id="IPR035684">
    <property type="entry name" value="ArgRS_core"/>
</dbReference>
<dbReference type="InterPro" id="IPR008909">
    <property type="entry name" value="DALR_anticod-bd"/>
</dbReference>
<dbReference type="InterPro" id="IPR014729">
    <property type="entry name" value="Rossmann-like_a/b/a_fold"/>
</dbReference>
<dbReference type="InterPro" id="IPR009080">
    <property type="entry name" value="tRNAsynth_Ia_anticodon-bd"/>
</dbReference>
<dbReference type="NCBIfam" id="TIGR00456">
    <property type="entry name" value="argS"/>
    <property type="match status" value="1"/>
</dbReference>
<dbReference type="PANTHER" id="PTHR11956:SF5">
    <property type="entry name" value="ARGININE--TRNA LIGASE, CYTOPLASMIC"/>
    <property type="match status" value="1"/>
</dbReference>
<dbReference type="PANTHER" id="PTHR11956">
    <property type="entry name" value="ARGINYL-TRNA SYNTHETASE"/>
    <property type="match status" value="1"/>
</dbReference>
<dbReference type="Pfam" id="PF03485">
    <property type="entry name" value="Arg_tRNA_synt_N"/>
    <property type="match status" value="1"/>
</dbReference>
<dbReference type="Pfam" id="PF05746">
    <property type="entry name" value="DALR_1"/>
    <property type="match status" value="1"/>
</dbReference>
<dbReference type="Pfam" id="PF00750">
    <property type="entry name" value="tRNA-synt_1d"/>
    <property type="match status" value="1"/>
</dbReference>
<dbReference type="PRINTS" id="PR01038">
    <property type="entry name" value="TRNASYNTHARG"/>
</dbReference>
<dbReference type="SMART" id="SM01016">
    <property type="entry name" value="Arg_tRNA_synt_N"/>
    <property type="match status" value="1"/>
</dbReference>
<dbReference type="SMART" id="SM00836">
    <property type="entry name" value="DALR_1"/>
    <property type="match status" value="1"/>
</dbReference>
<dbReference type="SUPFAM" id="SSF47323">
    <property type="entry name" value="Anticodon-binding domain of a subclass of class I aminoacyl-tRNA synthetases"/>
    <property type="match status" value="1"/>
</dbReference>
<dbReference type="SUPFAM" id="SSF55190">
    <property type="entry name" value="Arginyl-tRNA synthetase (ArgRS), N-terminal 'additional' domain"/>
    <property type="match status" value="1"/>
</dbReference>
<dbReference type="SUPFAM" id="SSF52374">
    <property type="entry name" value="Nucleotidylyl transferase"/>
    <property type="match status" value="1"/>
</dbReference>
<accession>C1CH08</accession>
<feature type="chain" id="PRO_1000198936" description="Arginine--tRNA ligase">
    <location>
        <begin position="1"/>
        <end position="563"/>
    </location>
</feature>
<feature type="short sequence motif" description="'HIGH' region">
    <location>
        <begin position="121"/>
        <end position="131"/>
    </location>
</feature>
<sequence>MNTKELIASELSSIIDSLDQEAILKLLETPKNSEMGDIAFPAFSLAKVERKAPQMIAAELAEKMNSQAFEKVVATGPYVNFFLDKSAISAQVLQAVTTEKEHYADQNIGKQENVVIDMSSPNIAKPFSIGHLRSTVIGDSLSHIFQKIGYQTVKVNHLGDWGKQFGMLIVAYKKWGDEEAVKAHPIDELLKLYVRINAEAENDPSLDEEAREWFRKLENGDEEALALWQWFRDESLVEFNRLYNELKVEFDSYNGEAFYNDKMDAVVDILSEKGLLLESEGAQVVNLEKYGIEHPALIKKSDGATLYITRDLAAALYRKNEYQFAKSIYVVGQEQSAHFKQLKAVLQEMGYDWSDDITHVPFGLVTKEGKKLSTRKGNVILLEPTVAEAVSRAKVQIEAKNPELENKDQVAHAVGVGAIKFYDLKTDRTNGYDFDLEAMVSFEGETGPYVQYAYARIQSILRKADFKPETAGNYSLNDTESWEIIKLIQDFPRIINRAADNFEPSIIAKFAISLAQSFNKYYAHTRILDESPERDSRLALSYATAVVLKEALRLLGVEAPEKM</sequence>